<organism>
    <name type="scientific">Oceanobacillus iheyensis (strain DSM 14371 / CIP 107618 / JCM 11309 / KCTC 3954 / HTE831)</name>
    <dbReference type="NCBI Taxonomy" id="221109"/>
    <lineage>
        <taxon>Bacteria</taxon>
        <taxon>Bacillati</taxon>
        <taxon>Bacillota</taxon>
        <taxon>Bacilli</taxon>
        <taxon>Bacillales</taxon>
        <taxon>Bacillaceae</taxon>
        <taxon>Oceanobacillus</taxon>
    </lineage>
</organism>
<accession>Q8EU35</accession>
<keyword id="KW-0131">Cell cycle</keyword>
<keyword id="KW-0132">Cell division</keyword>
<keyword id="KW-1185">Reference proteome</keyword>
<keyword id="KW-0717">Septation</keyword>
<gene>
    <name evidence="1" type="primary">spoVG</name>
    <name type="ordered locus">OB0057</name>
</gene>
<name>SP5G_OCEIH</name>
<feature type="chain" id="PRO_0000157203" description="Putative septation protein SpoVG">
    <location>
        <begin position="1"/>
        <end position="96"/>
    </location>
</feature>
<proteinExistence type="inferred from homology"/>
<sequence>MEVTDVRLRRVNTEGRMRAIASITLDQEFVVHDIRVIDGNNGLFVAMPSKRTPDGEFRDIAHPINSGTRSKIQEAVLAEYQKAGEDEVNYEEAGAS</sequence>
<dbReference type="EMBL" id="BA000028">
    <property type="protein sequence ID" value="BAC12013.1"/>
    <property type="molecule type" value="Genomic_DNA"/>
</dbReference>
<dbReference type="RefSeq" id="WP_011064459.1">
    <property type="nucleotide sequence ID" value="NC_004193.1"/>
</dbReference>
<dbReference type="SMR" id="Q8EU35"/>
<dbReference type="STRING" id="221109.gene:10732219"/>
<dbReference type="KEGG" id="oih:OB0057"/>
<dbReference type="eggNOG" id="COG2088">
    <property type="taxonomic scope" value="Bacteria"/>
</dbReference>
<dbReference type="HOGENOM" id="CLU_103669_2_1_9"/>
<dbReference type="OrthoDB" id="9796286at2"/>
<dbReference type="PhylomeDB" id="Q8EU35"/>
<dbReference type="Proteomes" id="UP000000822">
    <property type="component" value="Chromosome"/>
</dbReference>
<dbReference type="GO" id="GO:0000917">
    <property type="term" value="P:division septum assembly"/>
    <property type="evidence" value="ECO:0007669"/>
    <property type="project" value="UniProtKB-KW"/>
</dbReference>
<dbReference type="GO" id="GO:0030435">
    <property type="term" value="P:sporulation resulting in formation of a cellular spore"/>
    <property type="evidence" value="ECO:0007669"/>
    <property type="project" value="InterPro"/>
</dbReference>
<dbReference type="FunFam" id="3.30.1120.40:FF:000001">
    <property type="entry name" value="Putative septation protein SpoVG"/>
    <property type="match status" value="1"/>
</dbReference>
<dbReference type="Gene3D" id="3.30.1120.40">
    <property type="entry name" value="Stage V sporulation protein G"/>
    <property type="match status" value="1"/>
</dbReference>
<dbReference type="HAMAP" id="MF_00819">
    <property type="entry name" value="SpoVG"/>
    <property type="match status" value="1"/>
</dbReference>
<dbReference type="InterPro" id="IPR007170">
    <property type="entry name" value="SpoVG"/>
</dbReference>
<dbReference type="InterPro" id="IPR036751">
    <property type="entry name" value="SpoVG_sf"/>
</dbReference>
<dbReference type="NCBIfam" id="NF009749">
    <property type="entry name" value="PRK13259.1"/>
    <property type="match status" value="1"/>
</dbReference>
<dbReference type="PANTHER" id="PTHR38429">
    <property type="entry name" value="SEPTATION PROTEIN SPOVG-RELATED"/>
    <property type="match status" value="1"/>
</dbReference>
<dbReference type="PANTHER" id="PTHR38429:SF1">
    <property type="entry name" value="SEPTATION PROTEIN SPOVG-RELATED"/>
    <property type="match status" value="1"/>
</dbReference>
<dbReference type="Pfam" id="PF04026">
    <property type="entry name" value="SpoVG"/>
    <property type="match status" value="1"/>
</dbReference>
<dbReference type="SUPFAM" id="SSF160537">
    <property type="entry name" value="SpoVG-like"/>
    <property type="match status" value="1"/>
</dbReference>
<comment type="function">
    <text evidence="1">Could be involved in septation.</text>
</comment>
<comment type="similarity">
    <text evidence="1">Belongs to the SpoVG family.</text>
</comment>
<protein>
    <recommendedName>
        <fullName evidence="1">Putative septation protein SpoVG</fullName>
    </recommendedName>
</protein>
<evidence type="ECO:0000255" key="1">
    <source>
        <dbReference type="HAMAP-Rule" id="MF_00819"/>
    </source>
</evidence>
<reference key="1">
    <citation type="journal article" date="2002" name="Nucleic Acids Res.">
        <title>Genome sequence of Oceanobacillus iheyensis isolated from the Iheya Ridge and its unexpected adaptive capabilities to extreme environments.</title>
        <authorList>
            <person name="Takami H."/>
            <person name="Takaki Y."/>
            <person name="Uchiyama I."/>
        </authorList>
    </citation>
    <scope>NUCLEOTIDE SEQUENCE [LARGE SCALE GENOMIC DNA]</scope>
    <source>
        <strain>DSM 14371 / CIP 107618 / JCM 11309 / KCTC 3954 / HTE831</strain>
    </source>
</reference>